<dbReference type="EC" id="3.2.1.52" evidence="1"/>
<dbReference type="EMBL" id="CP000469">
    <property type="protein sequence ID" value="ABK48522.1"/>
    <property type="molecule type" value="Genomic_DNA"/>
</dbReference>
<dbReference type="RefSeq" id="WP_011717228.1">
    <property type="nucleotide sequence ID" value="NC_008577.1"/>
</dbReference>
<dbReference type="SMR" id="A0KXK3"/>
<dbReference type="STRING" id="94122.Shewana3_2293"/>
<dbReference type="CAZy" id="GH3">
    <property type="family name" value="Glycoside Hydrolase Family 3"/>
</dbReference>
<dbReference type="KEGG" id="shn:Shewana3_2293"/>
<dbReference type="eggNOG" id="COG1472">
    <property type="taxonomic scope" value="Bacteria"/>
</dbReference>
<dbReference type="HOGENOM" id="CLU_008392_0_0_6"/>
<dbReference type="OrthoDB" id="9786661at2"/>
<dbReference type="UniPathway" id="UPA00544"/>
<dbReference type="Proteomes" id="UP000002589">
    <property type="component" value="Chromosome"/>
</dbReference>
<dbReference type="GO" id="GO:0005737">
    <property type="term" value="C:cytoplasm"/>
    <property type="evidence" value="ECO:0007669"/>
    <property type="project" value="UniProtKB-SubCell"/>
</dbReference>
<dbReference type="GO" id="GO:0004563">
    <property type="term" value="F:beta-N-acetylhexosaminidase activity"/>
    <property type="evidence" value="ECO:0007669"/>
    <property type="project" value="UniProtKB-UniRule"/>
</dbReference>
<dbReference type="GO" id="GO:0005975">
    <property type="term" value="P:carbohydrate metabolic process"/>
    <property type="evidence" value="ECO:0007669"/>
    <property type="project" value="InterPro"/>
</dbReference>
<dbReference type="GO" id="GO:0051301">
    <property type="term" value="P:cell division"/>
    <property type="evidence" value="ECO:0007669"/>
    <property type="project" value="UniProtKB-KW"/>
</dbReference>
<dbReference type="GO" id="GO:0071555">
    <property type="term" value="P:cell wall organization"/>
    <property type="evidence" value="ECO:0007669"/>
    <property type="project" value="UniProtKB-KW"/>
</dbReference>
<dbReference type="GO" id="GO:0009252">
    <property type="term" value="P:peptidoglycan biosynthetic process"/>
    <property type="evidence" value="ECO:0007669"/>
    <property type="project" value="UniProtKB-KW"/>
</dbReference>
<dbReference type="GO" id="GO:0009254">
    <property type="term" value="P:peptidoglycan turnover"/>
    <property type="evidence" value="ECO:0007669"/>
    <property type="project" value="UniProtKB-UniRule"/>
</dbReference>
<dbReference type="GO" id="GO:0008360">
    <property type="term" value="P:regulation of cell shape"/>
    <property type="evidence" value="ECO:0007669"/>
    <property type="project" value="UniProtKB-KW"/>
</dbReference>
<dbReference type="FunFam" id="3.20.20.300:FF:000001">
    <property type="entry name" value="Beta-hexosaminidase"/>
    <property type="match status" value="1"/>
</dbReference>
<dbReference type="Gene3D" id="3.20.20.300">
    <property type="entry name" value="Glycoside hydrolase, family 3, N-terminal domain"/>
    <property type="match status" value="1"/>
</dbReference>
<dbReference type="HAMAP" id="MF_00364">
    <property type="entry name" value="NagZ"/>
    <property type="match status" value="1"/>
</dbReference>
<dbReference type="InterPro" id="IPR022956">
    <property type="entry name" value="Beta_hexosaminidase_bac"/>
</dbReference>
<dbReference type="InterPro" id="IPR019800">
    <property type="entry name" value="Glyco_hydro_3_AS"/>
</dbReference>
<dbReference type="InterPro" id="IPR001764">
    <property type="entry name" value="Glyco_hydro_3_N"/>
</dbReference>
<dbReference type="InterPro" id="IPR036962">
    <property type="entry name" value="Glyco_hydro_3_N_sf"/>
</dbReference>
<dbReference type="InterPro" id="IPR017853">
    <property type="entry name" value="Glycoside_hydrolase_SF"/>
</dbReference>
<dbReference type="InterPro" id="IPR050226">
    <property type="entry name" value="NagZ_Beta-hexosaminidase"/>
</dbReference>
<dbReference type="NCBIfam" id="NF003740">
    <property type="entry name" value="PRK05337.1"/>
    <property type="match status" value="1"/>
</dbReference>
<dbReference type="PANTHER" id="PTHR30480:SF13">
    <property type="entry name" value="BETA-HEXOSAMINIDASE"/>
    <property type="match status" value="1"/>
</dbReference>
<dbReference type="PANTHER" id="PTHR30480">
    <property type="entry name" value="BETA-HEXOSAMINIDASE-RELATED"/>
    <property type="match status" value="1"/>
</dbReference>
<dbReference type="Pfam" id="PF00933">
    <property type="entry name" value="Glyco_hydro_3"/>
    <property type="match status" value="1"/>
</dbReference>
<dbReference type="SUPFAM" id="SSF51445">
    <property type="entry name" value="(Trans)glycosidases"/>
    <property type="match status" value="1"/>
</dbReference>
<dbReference type="PROSITE" id="PS00775">
    <property type="entry name" value="GLYCOSYL_HYDROL_F3"/>
    <property type="match status" value="1"/>
</dbReference>
<accession>A0KXK3</accession>
<evidence type="ECO:0000255" key="1">
    <source>
        <dbReference type="HAMAP-Rule" id="MF_00364"/>
    </source>
</evidence>
<gene>
    <name evidence="1" type="primary">nagZ</name>
    <name type="ordered locus">Shewana3_2293</name>
</gene>
<protein>
    <recommendedName>
        <fullName evidence="1">Beta-hexosaminidase</fullName>
        <ecNumber evidence="1">3.2.1.52</ecNumber>
    </recommendedName>
    <alternativeName>
        <fullName evidence="1">Beta-N-acetylhexosaminidase</fullName>
    </alternativeName>
    <alternativeName>
        <fullName evidence="1">N-acetyl-beta-glucosaminidase</fullName>
    </alternativeName>
</protein>
<reference key="1">
    <citation type="submission" date="2006-09" db="EMBL/GenBank/DDBJ databases">
        <title>Complete sequence of chromosome 1 of Shewanella sp. ANA-3.</title>
        <authorList>
            <person name="Copeland A."/>
            <person name="Lucas S."/>
            <person name="Lapidus A."/>
            <person name="Barry K."/>
            <person name="Detter J.C."/>
            <person name="Glavina del Rio T."/>
            <person name="Hammon N."/>
            <person name="Israni S."/>
            <person name="Dalin E."/>
            <person name="Tice H."/>
            <person name="Pitluck S."/>
            <person name="Chertkov O."/>
            <person name="Brettin T."/>
            <person name="Bruce D."/>
            <person name="Han C."/>
            <person name="Tapia R."/>
            <person name="Gilna P."/>
            <person name="Schmutz J."/>
            <person name="Larimer F."/>
            <person name="Land M."/>
            <person name="Hauser L."/>
            <person name="Kyrpides N."/>
            <person name="Kim E."/>
            <person name="Newman D."/>
            <person name="Salticov C."/>
            <person name="Konstantinidis K."/>
            <person name="Klappenback J."/>
            <person name="Tiedje J."/>
            <person name="Richardson P."/>
        </authorList>
    </citation>
    <scope>NUCLEOTIDE SEQUENCE [LARGE SCALE GENOMIC DNA]</scope>
    <source>
        <strain>ANA-3</strain>
    </source>
</reference>
<organism>
    <name type="scientific">Shewanella sp. (strain ANA-3)</name>
    <dbReference type="NCBI Taxonomy" id="94122"/>
    <lineage>
        <taxon>Bacteria</taxon>
        <taxon>Pseudomonadati</taxon>
        <taxon>Pseudomonadota</taxon>
        <taxon>Gammaproteobacteria</taxon>
        <taxon>Alteromonadales</taxon>
        <taxon>Shewanellaceae</taxon>
        <taxon>Shewanella</taxon>
    </lineage>
</organism>
<name>NAGZ_SHESA</name>
<sequence length="342" mass="36985">MSYLMLDLLSLDVSEAEAEMLRHPQVGGLILFSRNFSSREQLIALVQQIRQIRPEILIAVDHEGGRVQRFREGFTLIPAMGDILPAAKGDMVIAKRWACELGFLMAIELLACDIDLSFAPVLDLNGISQVIGKRSFSAKPEEVIALAQSFIEGMAEAGMGAVGKHFPGHGSVAADSHIAQPIDEREAEAIFNQDILPFKDLIAMGKLSGIMPAHVIYPKVDPNPAGFSSYWLKQILRKELGFNGVIFSDDLGMKGASIAGDYLGRAQAALDAGCDMILVCNDNPGVMSLLNGFVWPASAPQHPASLLKPNAAQTAIALENASRWENAKQLAEQIQLAQQAKV</sequence>
<keyword id="KW-0131">Cell cycle</keyword>
<keyword id="KW-0132">Cell division</keyword>
<keyword id="KW-0133">Cell shape</keyword>
<keyword id="KW-0961">Cell wall biogenesis/degradation</keyword>
<keyword id="KW-0963">Cytoplasm</keyword>
<keyword id="KW-0326">Glycosidase</keyword>
<keyword id="KW-0378">Hydrolase</keyword>
<keyword id="KW-0573">Peptidoglycan synthesis</keyword>
<proteinExistence type="inferred from homology"/>
<comment type="function">
    <text evidence="1">Plays a role in peptidoglycan recycling by cleaving the terminal beta-1,4-linked N-acetylglucosamine (GlcNAc) from peptide-linked peptidoglycan fragments, giving rise to free GlcNAc, anhydro-N-acetylmuramic acid and anhydro-N-acetylmuramic acid-linked peptides.</text>
</comment>
<comment type="catalytic activity">
    <reaction evidence="1">
        <text>Hydrolysis of terminal non-reducing N-acetyl-D-hexosamine residues in N-acetyl-beta-D-hexosaminides.</text>
        <dbReference type="EC" id="3.2.1.52"/>
    </reaction>
</comment>
<comment type="pathway">
    <text evidence="1">Cell wall biogenesis; peptidoglycan recycling.</text>
</comment>
<comment type="subcellular location">
    <subcellularLocation>
        <location evidence="1">Cytoplasm</location>
    </subcellularLocation>
</comment>
<comment type="similarity">
    <text evidence="1">Belongs to the glycosyl hydrolase 3 family. NagZ subfamily.</text>
</comment>
<feature type="chain" id="PRO_1000005662" description="Beta-hexosaminidase">
    <location>
        <begin position="1"/>
        <end position="342"/>
    </location>
</feature>
<feature type="active site" description="Proton donor/acceptor" evidence="1">
    <location>
        <position position="177"/>
    </location>
</feature>
<feature type="active site" description="Nucleophile" evidence="1">
    <location>
        <position position="249"/>
    </location>
</feature>
<feature type="binding site" evidence="1">
    <location>
        <position position="61"/>
    </location>
    <ligand>
        <name>substrate</name>
    </ligand>
</feature>
<feature type="binding site" evidence="1">
    <location>
        <position position="69"/>
    </location>
    <ligand>
        <name>substrate</name>
    </ligand>
</feature>
<feature type="binding site" evidence="1">
    <location>
        <position position="134"/>
    </location>
    <ligand>
        <name>substrate</name>
    </ligand>
</feature>
<feature type="binding site" evidence="1">
    <location>
        <begin position="164"/>
        <end position="165"/>
    </location>
    <ligand>
        <name>substrate</name>
    </ligand>
</feature>
<feature type="site" description="Important for catalytic activity" evidence="1">
    <location>
        <position position="175"/>
    </location>
</feature>